<proteinExistence type="inferred from homology"/>
<evidence type="ECO:0000255" key="1"/>
<evidence type="ECO:0000305" key="2"/>
<accession>O72896</accession>
<feature type="chain" id="PRO_0000099641" description="Protein O1 homolog">
    <location>
        <begin position="1"/>
        <end position="656"/>
    </location>
</feature>
<feature type="transmembrane region" description="Helical" evidence="1">
    <location>
        <begin position="544"/>
        <end position="564"/>
    </location>
</feature>
<reference key="1">
    <citation type="journal article" date="1998" name="Virus Genes">
        <title>Nucleotide sequence of the 4.3 kbp BamHI-N fragment of fowlpox virus FP9.</title>
        <authorList>
            <person name="Pollitt E."/>
            <person name="Skinner M.A."/>
            <person name="Heaphy S."/>
        </authorList>
    </citation>
    <scope>NUCLEOTIDE SEQUENCE [GENOMIC DNA]</scope>
    <source>
        <strain>FP-9 / Isolate HP-440</strain>
    </source>
</reference>
<reference key="2">
    <citation type="journal article" date="2000" name="J. Virol.">
        <title>The genome of fowlpox virus.</title>
        <authorList>
            <person name="Afonso C.L."/>
            <person name="Tulman E.R."/>
            <person name="Lu Z."/>
            <person name="Zsak L."/>
            <person name="Kutish G.F."/>
            <person name="Rock D.L."/>
        </authorList>
    </citation>
    <scope>NUCLEOTIDE SEQUENCE [LARGE SCALE GENOMIC DNA]</scope>
</reference>
<keyword id="KW-0472">Membrane</keyword>
<keyword id="KW-1185">Reference proteome</keyword>
<keyword id="KW-0812">Transmembrane</keyword>
<keyword id="KW-1133">Transmembrane helix</keyword>
<sequence>MANLYSKKVRKSIRKFIRSGLNFDLLHEKHGRRLIINNIFVKLPPKYYNFAKGLDLNNILAFDSEIIQLNDLKKLIMRLPLLPDCFTDVISCHKKYLLSDAAIVNKLINSNMVSLSDIRNIIDNRIKTPVEIALLNSSLVIPGTPFSLDEVKYIFENTSAENVKELYKRIETPIHSVLYMEEKFSISPVHSSLYQVTDVDKIIYLIKKYPDDDIIDYVNGIVKSKKDFIESIITIIKDRLPDISPCLNKWISTQLPPDKLRDEFGIYFYALFEWIDIPLYIDKYLFLNITEDETKFICRYIDIYKKKSELFVNAFRWHLYYCNSMYPQKVFPVITYKQDSKEKYVVKESFKYLDNKQTMKVLLNDFKYNYAIGKYILDSSSSNEVKMDALNMLQKQVVCLENAKCFDLGNLYSVLIKFQYHPVDYVMYSDKLLDYMSKNSTFDNNDIGLLTLASFLFSTAKKGIIDINFLNTNSLWSPLMYLIDDSCKVDFTRFMMATKNIKADNINYLKNKDENINNNFEHIDNIDIYKLLDYSRIKLYGINFIKKVILANVIFEYIFTLIIIRYQKTSYNLRSFLEMLLYRCLKGFGISPKLYKNVYVNEMNICCELENLINNYVVPFKTYGILMKLLITIFNNLNGISKHSFRIRVRKSKTLL</sequence>
<organismHost>
    <name type="scientific">Vertebrata</name>
    <dbReference type="NCBI Taxonomy" id="7742"/>
</organismHost>
<gene>
    <name type="ordered locus">FPV091</name>
    <name type="ORF">FPO1L</name>
</gene>
<protein>
    <recommendedName>
        <fullName>Protein O1 homolog</fullName>
    </recommendedName>
    <alternativeName>
        <fullName>Protein FPV091</fullName>
    </alternativeName>
</protein>
<organism>
    <name type="scientific">Fowlpox virus (strain NVSL)</name>
    <name type="common">FPV</name>
    <dbReference type="NCBI Taxonomy" id="928301"/>
    <lineage>
        <taxon>Viruses</taxon>
        <taxon>Varidnaviria</taxon>
        <taxon>Bamfordvirae</taxon>
        <taxon>Nucleocytoviricota</taxon>
        <taxon>Pokkesviricetes</taxon>
        <taxon>Chitovirales</taxon>
        <taxon>Poxviridae</taxon>
        <taxon>Chordopoxvirinae</taxon>
        <taxon>Avipoxvirus</taxon>
        <taxon>Fowlpox virus</taxon>
    </lineage>
</organism>
<dbReference type="EMBL" id="AJ223385">
    <property type="protein sequence ID" value="CAA11289.1"/>
    <property type="molecule type" value="Genomic_DNA"/>
</dbReference>
<dbReference type="EMBL" id="AF198100">
    <property type="protein sequence ID" value="AAF44435.1"/>
    <property type="molecule type" value="Genomic_DNA"/>
</dbReference>
<dbReference type="RefSeq" id="NP_039054.1">
    <property type="nucleotide sequence ID" value="NC_002188.1"/>
</dbReference>
<dbReference type="SMR" id="O72896"/>
<dbReference type="GeneID" id="1486639"/>
<dbReference type="KEGG" id="vg:1486639"/>
<dbReference type="Proteomes" id="UP000008597">
    <property type="component" value="Segment"/>
</dbReference>
<dbReference type="GO" id="GO:0016020">
    <property type="term" value="C:membrane"/>
    <property type="evidence" value="ECO:0007669"/>
    <property type="project" value="UniProtKB-SubCell"/>
</dbReference>
<dbReference type="InterPro" id="IPR021155">
    <property type="entry name" value="Poxvirus_E2/O1"/>
</dbReference>
<dbReference type="InterPro" id="IPR006732">
    <property type="entry name" value="Poxvirus_O1"/>
</dbReference>
<dbReference type="Pfam" id="PF04497">
    <property type="entry name" value="Pox_E2-like"/>
    <property type="match status" value="1"/>
</dbReference>
<dbReference type="PIRSF" id="PIRSF015980">
    <property type="entry name" value="VAC_O1L"/>
    <property type="match status" value="1"/>
</dbReference>
<name>O1_FOWPN</name>
<comment type="subcellular location">
    <subcellularLocation>
        <location evidence="2">Membrane</location>
        <topology evidence="2">Single-pass membrane protein</topology>
    </subcellularLocation>
</comment>
<comment type="similarity">
    <text evidence="2">Belongs to the chordopoxvirinae O1 family.</text>
</comment>